<organism>
    <name type="scientific">Mycobacterium leprae (strain TN)</name>
    <dbReference type="NCBI Taxonomy" id="272631"/>
    <lineage>
        <taxon>Bacteria</taxon>
        <taxon>Bacillati</taxon>
        <taxon>Actinomycetota</taxon>
        <taxon>Actinomycetes</taxon>
        <taxon>Mycobacteriales</taxon>
        <taxon>Mycobacteriaceae</taxon>
        <taxon>Mycobacterium</taxon>
    </lineage>
</organism>
<gene>
    <name evidence="1" type="primary">alaS</name>
    <name type="ordered locus">ML0512</name>
</gene>
<evidence type="ECO:0000255" key="1">
    <source>
        <dbReference type="HAMAP-Rule" id="MF_00036"/>
    </source>
</evidence>
<accession>Q9CCT0</accession>
<comment type="function">
    <text evidence="1">Catalyzes the attachment of alanine to tRNA(Ala) in a two-step reaction: alanine is first activated by ATP to form Ala-AMP and then transferred to the acceptor end of tRNA(Ala). Also edits incorrectly charged Ser-tRNA(Ala) and Gly-tRNA(Ala) via its editing domain.</text>
</comment>
<comment type="catalytic activity">
    <reaction evidence="1">
        <text>tRNA(Ala) + L-alanine + ATP = L-alanyl-tRNA(Ala) + AMP + diphosphate</text>
        <dbReference type="Rhea" id="RHEA:12540"/>
        <dbReference type="Rhea" id="RHEA-COMP:9657"/>
        <dbReference type="Rhea" id="RHEA-COMP:9923"/>
        <dbReference type="ChEBI" id="CHEBI:30616"/>
        <dbReference type="ChEBI" id="CHEBI:33019"/>
        <dbReference type="ChEBI" id="CHEBI:57972"/>
        <dbReference type="ChEBI" id="CHEBI:78442"/>
        <dbReference type="ChEBI" id="CHEBI:78497"/>
        <dbReference type="ChEBI" id="CHEBI:456215"/>
        <dbReference type="EC" id="6.1.1.7"/>
    </reaction>
</comment>
<comment type="cofactor">
    <cofactor evidence="1">
        <name>Zn(2+)</name>
        <dbReference type="ChEBI" id="CHEBI:29105"/>
    </cofactor>
    <text evidence="1">Binds 1 zinc ion per subunit.</text>
</comment>
<comment type="subcellular location">
    <subcellularLocation>
        <location evidence="1">Cytoplasm</location>
    </subcellularLocation>
</comment>
<comment type="domain">
    <text evidence="1">Consists of three domains; the N-terminal catalytic domain, the editing domain and the C-terminal C-Ala domain. The editing domain removes incorrectly charged amino acids, while the C-Ala domain, along with tRNA(Ala), serves as a bridge to cooperatively bring together the editing and aminoacylation centers thus stimulating deacylation of misacylated tRNAs.</text>
</comment>
<comment type="similarity">
    <text evidence="1">Belongs to the class-II aminoacyl-tRNA synthetase family.</text>
</comment>
<keyword id="KW-0030">Aminoacyl-tRNA synthetase</keyword>
<keyword id="KW-0067">ATP-binding</keyword>
<keyword id="KW-0963">Cytoplasm</keyword>
<keyword id="KW-0436">Ligase</keyword>
<keyword id="KW-0479">Metal-binding</keyword>
<keyword id="KW-0547">Nucleotide-binding</keyword>
<keyword id="KW-0648">Protein biosynthesis</keyword>
<keyword id="KW-1185">Reference proteome</keyword>
<keyword id="KW-0694">RNA-binding</keyword>
<keyword id="KW-0820">tRNA-binding</keyword>
<keyword id="KW-0862">Zinc</keyword>
<feature type="chain" id="PRO_0000075145" description="Alanine--tRNA ligase">
    <location>
        <begin position="1"/>
        <end position="908"/>
    </location>
</feature>
<feature type="binding site" evidence="1">
    <location>
        <position position="588"/>
    </location>
    <ligand>
        <name>Zn(2+)</name>
        <dbReference type="ChEBI" id="CHEBI:29105"/>
    </ligand>
</feature>
<feature type="binding site" evidence="1">
    <location>
        <position position="592"/>
    </location>
    <ligand>
        <name>Zn(2+)</name>
        <dbReference type="ChEBI" id="CHEBI:29105"/>
    </ligand>
</feature>
<feature type="binding site" evidence="1">
    <location>
        <position position="691"/>
    </location>
    <ligand>
        <name>Zn(2+)</name>
        <dbReference type="ChEBI" id="CHEBI:29105"/>
    </ligand>
</feature>
<feature type="binding site" evidence="1">
    <location>
        <position position="695"/>
    </location>
    <ligand>
        <name>Zn(2+)</name>
        <dbReference type="ChEBI" id="CHEBI:29105"/>
    </ligand>
</feature>
<name>SYA_MYCLE</name>
<protein>
    <recommendedName>
        <fullName evidence="1">Alanine--tRNA ligase</fullName>
        <ecNumber evidence="1">6.1.1.7</ecNumber>
    </recommendedName>
    <alternativeName>
        <fullName evidence="1">Alanyl-tRNA synthetase</fullName>
        <shortName evidence="1">AlaRS</shortName>
    </alternativeName>
</protein>
<proteinExistence type="inferred from homology"/>
<reference key="1">
    <citation type="journal article" date="2001" name="Nature">
        <title>Massive gene decay in the leprosy bacillus.</title>
        <authorList>
            <person name="Cole S.T."/>
            <person name="Eiglmeier K."/>
            <person name="Parkhill J."/>
            <person name="James K.D."/>
            <person name="Thomson N.R."/>
            <person name="Wheeler P.R."/>
            <person name="Honore N."/>
            <person name="Garnier T."/>
            <person name="Churcher C.M."/>
            <person name="Harris D.E."/>
            <person name="Mungall K.L."/>
            <person name="Basham D."/>
            <person name="Brown D."/>
            <person name="Chillingworth T."/>
            <person name="Connor R."/>
            <person name="Davies R.M."/>
            <person name="Devlin K."/>
            <person name="Duthoy S."/>
            <person name="Feltwell T."/>
            <person name="Fraser A."/>
            <person name="Hamlin N."/>
            <person name="Holroyd S."/>
            <person name="Hornsby T."/>
            <person name="Jagels K."/>
            <person name="Lacroix C."/>
            <person name="Maclean J."/>
            <person name="Moule S."/>
            <person name="Murphy L.D."/>
            <person name="Oliver K."/>
            <person name="Quail M.A."/>
            <person name="Rajandream M.A."/>
            <person name="Rutherford K.M."/>
            <person name="Rutter S."/>
            <person name="Seeger K."/>
            <person name="Simon S."/>
            <person name="Simmonds M."/>
            <person name="Skelton J."/>
            <person name="Squares R."/>
            <person name="Squares S."/>
            <person name="Stevens K."/>
            <person name="Taylor K."/>
            <person name="Whitehead S."/>
            <person name="Woodward J.R."/>
            <person name="Barrell B.G."/>
        </authorList>
    </citation>
    <scope>NUCLEOTIDE SEQUENCE [LARGE SCALE GENOMIC DNA]</scope>
    <source>
        <strain>TN</strain>
    </source>
</reference>
<dbReference type="EC" id="6.1.1.7" evidence="1"/>
<dbReference type="EMBL" id="AL583918">
    <property type="protein sequence ID" value="CAC30020.1"/>
    <property type="molecule type" value="Genomic_DNA"/>
</dbReference>
<dbReference type="PIR" id="H86972">
    <property type="entry name" value="H86972"/>
</dbReference>
<dbReference type="RefSeq" id="NP_301437.1">
    <property type="nucleotide sequence ID" value="NC_002677.1"/>
</dbReference>
<dbReference type="RefSeq" id="WP_010907761.1">
    <property type="nucleotide sequence ID" value="NC_002677.1"/>
</dbReference>
<dbReference type="SMR" id="Q9CCT0"/>
<dbReference type="STRING" id="272631.gene:17574333"/>
<dbReference type="KEGG" id="mle:ML0512"/>
<dbReference type="PATRIC" id="fig|272631.5.peg.901"/>
<dbReference type="Leproma" id="ML0512"/>
<dbReference type="eggNOG" id="COG0013">
    <property type="taxonomic scope" value="Bacteria"/>
</dbReference>
<dbReference type="HOGENOM" id="CLU_004485_1_1_11"/>
<dbReference type="OrthoDB" id="9803884at2"/>
<dbReference type="Proteomes" id="UP000000806">
    <property type="component" value="Chromosome"/>
</dbReference>
<dbReference type="GO" id="GO:0005829">
    <property type="term" value="C:cytosol"/>
    <property type="evidence" value="ECO:0007669"/>
    <property type="project" value="TreeGrafter"/>
</dbReference>
<dbReference type="GO" id="GO:0004813">
    <property type="term" value="F:alanine-tRNA ligase activity"/>
    <property type="evidence" value="ECO:0007669"/>
    <property type="project" value="UniProtKB-UniRule"/>
</dbReference>
<dbReference type="GO" id="GO:0002161">
    <property type="term" value="F:aminoacyl-tRNA deacylase activity"/>
    <property type="evidence" value="ECO:0007669"/>
    <property type="project" value="TreeGrafter"/>
</dbReference>
<dbReference type="GO" id="GO:0005524">
    <property type="term" value="F:ATP binding"/>
    <property type="evidence" value="ECO:0007669"/>
    <property type="project" value="UniProtKB-UniRule"/>
</dbReference>
<dbReference type="GO" id="GO:0000049">
    <property type="term" value="F:tRNA binding"/>
    <property type="evidence" value="ECO:0007669"/>
    <property type="project" value="UniProtKB-KW"/>
</dbReference>
<dbReference type="GO" id="GO:0008270">
    <property type="term" value="F:zinc ion binding"/>
    <property type="evidence" value="ECO:0007669"/>
    <property type="project" value="UniProtKB-UniRule"/>
</dbReference>
<dbReference type="GO" id="GO:0006419">
    <property type="term" value="P:alanyl-tRNA aminoacylation"/>
    <property type="evidence" value="ECO:0007669"/>
    <property type="project" value="UniProtKB-UniRule"/>
</dbReference>
<dbReference type="CDD" id="cd00673">
    <property type="entry name" value="AlaRS_core"/>
    <property type="match status" value="1"/>
</dbReference>
<dbReference type="FunFam" id="3.10.310.40:FF:000001">
    <property type="entry name" value="Alanine--tRNA ligase"/>
    <property type="match status" value="1"/>
</dbReference>
<dbReference type="FunFam" id="3.30.54.20:FF:000001">
    <property type="entry name" value="Alanine--tRNA ligase"/>
    <property type="match status" value="1"/>
</dbReference>
<dbReference type="FunFam" id="3.30.930.10:FF:000004">
    <property type="entry name" value="Alanine--tRNA ligase"/>
    <property type="match status" value="1"/>
</dbReference>
<dbReference type="FunFam" id="3.30.980.10:FF:000004">
    <property type="entry name" value="Alanine--tRNA ligase, cytoplasmic"/>
    <property type="match status" value="1"/>
</dbReference>
<dbReference type="Gene3D" id="2.40.30.130">
    <property type="match status" value="1"/>
</dbReference>
<dbReference type="Gene3D" id="3.10.310.40">
    <property type="match status" value="1"/>
</dbReference>
<dbReference type="Gene3D" id="3.30.54.20">
    <property type="match status" value="1"/>
</dbReference>
<dbReference type="Gene3D" id="6.10.250.550">
    <property type="match status" value="1"/>
</dbReference>
<dbReference type="Gene3D" id="3.30.930.10">
    <property type="entry name" value="Bira Bifunctional Protein, Domain 2"/>
    <property type="match status" value="1"/>
</dbReference>
<dbReference type="Gene3D" id="3.30.980.10">
    <property type="entry name" value="Threonyl-trna Synthetase, Chain A, domain 2"/>
    <property type="match status" value="1"/>
</dbReference>
<dbReference type="HAMAP" id="MF_00036_B">
    <property type="entry name" value="Ala_tRNA_synth_B"/>
    <property type="match status" value="1"/>
</dbReference>
<dbReference type="InterPro" id="IPR045864">
    <property type="entry name" value="aa-tRNA-synth_II/BPL/LPL"/>
</dbReference>
<dbReference type="InterPro" id="IPR002318">
    <property type="entry name" value="Ala-tRNA-lgiase_IIc"/>
</dbReference>
<dbReference type="InterPro" id="IPR018162">
    <property type="entry name" value="Ala-tRNA-ligase_IIc_anticod-bd"/>
</dbReference>
<dbReference type="InterPro" id="IPR018165">
    <property type="entry name" value="Ala-tRNA-synth_IIc_core"/>
</dbReference>
<dbReference type="InterPro" id="IPR018164">
    <property type="entry name" value="Ala-tRNA-synth_IIc_N"/>
</dbReference>
<dbReference type="InterPro" id="IPR050058">
    <property type="entry name" value="Ala-tRNA_ligase"/>
</dbReference>
<dbReference type="InterPro" id="IPR023033">
    <property type="entry name" value="Ala_tRNA_ligase_euk/bac"/>
</dbReference>
<dbReference type="InterPro" id="IPR003156">
    <property type="entry name" value="DHHA1_dom"/>
</dbReference>
<dbReference type="InterPro" id="IPR018163">
    <property type="entry name" value="Thr/Ala-tRNA-synth_IIc_edit"/>
</dbReference>
<dbReference type="InterPro" id="IPR009000">
    <property type="entry name" value="Transl_B-barrel_sf"/>
</dbReference>
<dbReference type="InterPro" id="IPR012947">
    <property type="entry name" value="tRNA_SAD"/>
</dbReference>
<dbReference type="NCBIfam" id="TIGR00344">
    <property type="entry name" value="alaS"/>
    <property type="match status" value="1"/>
</dbReference>
<dbReference type="PANTHER" id="PTHR11777:SF9">
    <property type="entry name" value="ALANINE--TRNA LIGASE, CYTOPLASMIC"/>
    <property type="match status" value="1"/>
</dbReference>
<dbReference type="PANTHER" id="PTHR11777">
    <property type="entry name" value="ALANYL-TRNA SYNTHETASE"/>
    <property type="match status" value="1"/>
</dbReference>
<dbReference type="Pfam" id="PF02272">
    <property type="entry name" value="DHHA1"/>
    <property type="match status" value="1"/>
</dbReference>
<dbReference type="Pfam" id="PF01411">
    <property type="entry name" value="tRNA-synt_2c"/>
    <property type="match status" value="1"/>
</dbReference>
<dbReference type="Pfam" id="PF07973">
    <property type="entry name" value="tRNA_SAD"/>
    <property type="match status" value="1"/>
</dbReference>
<dbReference type="PRINTS" id="PR00980">
    <property type="entry name" value="TRNASYNTHALA"/>
</dbReference>
<dbReference type="SMART" id="SM00863">
    <property type="entry name" value="tRNA_SAD"/>
    <property type="match status" value="1"/>
</dbReference>
<dbReference type="SUPFAM" id="SSF55681">
    <property type="entry name" value="Class II aaRS and biotin synthetases"/>
    <property type="match status" value="1"/>
</dbReference>
<dbReference type="SUPFAM" id="SSF101353">
    <property type="entry name" value="Putative anticodon-binding domain of alanyl-tRNA synthetase (AlaRS)"/>
    <property type="match status" value="1"/>
</dbReference>
<dbReference type="SUPFAM" id="SSF55186">
    <property type="entry name" value="ThrRS/AlaRS common domain"/>
    <property type="match status" value="1"/>
</dbReference>
<dbReference type="SUPFAM" id="SSF50447">
    <property type="entry name" value="Translation proteins"/>
    <property type="match status" value="1"/>
</dbReference>
<dbReference type="PROSITE" id="PS50860">
    <property type="entry name" value="AA_TRNA_LIGASE_II_ALA"/>
    <property type="match status" value="1"/>
</dbReference>
<sequence>MQTHEIRKRFLDHFVKAGHTEVPSASVILDDPNLLFVNAGMVQFVPFFLGQCTPPYATATSIQKCIRTPDIDDVGITTRHNTFFQMAGNFSFGDYFKRGAIELAWALLTNSFADGGYGLDPERLWATVYLDDDEAAGLWQEIAGLPPERIQRRGMADNYWSMGIPGPCGPSSEIYYDRGPEFGPEGGPIVNEDRYLEVWNLVFMQNERGEGTTKEDYEIRGPLPRKNIDTGMGVERIALVLQGVHNVYEIDLLRPVIDLVATRAPRPYDPENEDTNHADNVRYRIIADHSRTAAILIGDGVSPVNDGRGYVLRRLLRRIIRSAKLLGIDSPIVGDLMATVCNAMGRAYPGLVTDFDRINRIAVAEETAFNRTLTSGSKLFDDVVGATVASGSTVVAGLDAFTLHDTYGFPIELTLEMAAEAGLTVDEKGFHELMLQQRQRAKVDAAARKQAHVDLTAYRELVDAGPTEFTGFDELTTEARILGIFVEGKRVPVVAHAVRGQAGITNRVELVLDRTPLYAESGGQIADAGTISGIGAGASSRAAVTDVQKIAKTLHVHRVNLESGEFVEGDTVVAVVDPGWRRGAAQGHSGTHIVHAALRQVLGPNAVQAGSLNRPGYLRFDFNWQGSLTGEQRTQIEEVTNEAVQADFEVHTFTEKLDTAKAMGAIALFGEAYPDEVRVVEMGGPFSLELCGGTHVHNTAQIGPVTILGESSIGSGVRRVEAYVGLDSFRHLAKERALMAGLASSLQVPSEEVHARVATLVERLKAAEKELERARQANVQAAATKAAAGAEWIGNVRVVVQRMSGPIAPDDLRFLVGDIRGKLGSDPAVVALIAVTSDGPTATVPYAVAANPAAQDLGIRANDLVEQLAMVVDGRGGGKADLAQGSGKDPTGIDAALDTVRAQIAQVG</sequence>